<evidence type="ECO:0000255" key="1">
    <source>
        <dbReference type="HAMAP-Rule" id="MF_00795"/>
    </source>
</evidence>
<protein>
    <recommendedName>
        <fullName evidence="1">PF03932 family protein CutC</fullName>
    </recommendedName>
</protein>
<reference key="1">
    <citation type="journal article" date="2009" name="PLoS Genet.">
        <title>Organised genome dynamics in the Escherichia coli species results in highly diverse adaptive paths.</title>
        <authorList>
            <person name="Touchon M."/>
            <person name="Hoede C."/>
            <person name="Tenaillon O."/>
            <person name="Barbe V."/>
            <person name="Baeriswyl S."/>
            <person name="Bidet P."/>
            <person name="Bingen E."/>
            <person name="Bonacorsi S."/>
            <person name="Bouchier C."/>
            <person name="Bouvet O."/>
            <person name="Calteau A."/>
            <person name="Chiapello H."/>
            <person name="Clermont O."/>
            <person name="Cruveiller S."/>
            <person name="Danchin A."/>
            <person name="Diard M."/>
            <person name="Dossat C."/>
            <person name="Karoui M.E."/>
            <person name="Frapy E."/>
            <person name="Garry L."/>
            <person name="Ghigo J.M."/>
            <person name="Gilles A.M."/>
            <person name="Johnson J."/>
            <person name="Le Bouguenec C."/>
            <person name="Lescat M."/>
            <person name="Mangenot S."/>
            <person name="Martinez-Jehanne V."/>
            <person name="Matic I."/>
            <person name="Nassif X."/>
            <person name="Oztas S."/>
            <person name="Petit M.A."/>
            <person name="Pichon C."/>
            <person name="Rouy Z."/>
            <person name="Ruf C.S."/>
            <person name="Schneider D."/>
            <person name="Tourret J."/>
            <person name="Vacherie B."/>
            <person name="Vallenet D."/>
            <person name="Medigue C."/>
            <person name="Rocha E.P.C."/>
            <person name="Denamur E."/>
        </authorList>
    </citation>
    <scope>NUCLEOTIDE SEQUENCE [LARGE SCALE GENOMIC DNA]</scope>
    <source>
        <strain>IAI1</strain>
    </source>
</reference>
<dbReference type="EMBL" id="CU928160">
    <property type="protein sequence ID" value="CAQ98814.1"/>
    <property type="molecule type" value="Genomic_DNA"/>
</dbReference>
<dbReference type="RefSeq" id="WP_001185741.1">
    <property type="nucleotide sequence ID" value="NC_011741.1"/>
</dbReference>
<dbReference type="SMR" id="B7M2G5"/>
<dbReference type="GeneID" id="93776175"/>
<dbReference type="KEGG" id="ecr:ECIAI1_1961"/>
<dbReference type="HOGENOM" id="CLU_050555_3_1_6"/>
<dbReference type="GO" id="GO:0005737">
    <property type="term" value="C:cytoplasm"/>
    <property type="evidence" value="ECO:0007669"/>
    <property type="project" value="UniProtKB-SubCell"/>
</dbReference>
<dbReference type="GO" id="GO:0005507">
    <property type="term" value="F:copper ion binding"/>
    <property type="evidence" value="ECO:0007669"/>
    <property type="project" value="TreeGrafter"/>
</dbReference>
<dbReference type="FunFam" id="3.20.20.380:FF:000001">
    <property type="entry name" value="Copper homeostasis protein CutC"/>
    <property type="match status" value="1"/>
</dbReference>
<dbReference type="Gene3D" id="3.20.20.380">
    <property type="entry name" value="Copper homeostasis (CutC) domain"/>
    <property type="match status" value="1"/>
</dbReference>
<dbReference type="HAMAP" id="MF_00795">
    <property type="entry name" value="CutC"/>
    <property type="match status" value="1"/>
</dbReference>
<dbReference type="InterPro" id="IPR005627">
    <property type="entry name" value="CutC-like"/>
</dbReference>
<dbReference type="InterPro" id="IPR036822">
    <property type="entry name" value="CutC-like_dom_sf"/>
</dbReference>
<dbReference type="NCBIfam" id="NF008603">
    <property type="entry name" value="PRK11572.1"/>
    <property type="match status" value="1"/>
</dbReference>
<dbReference type="PANTHER" id="PTHR12598">
    <property type="entry name" value="COPPER HOMEOSTASIS PROTEIN CUTC"/>
    <property type="match status" value="1"/>
</dbReference>
<dbReference type="PANTHER" id="PTHR12598:SF0">
    <property type="entry name" value="COPPER HOMEOSTASIS PROTEIN CUTC HOMOLOG"/>
    <property type="match status" value="1"/>
</dbReference>
<dbReference type="Pfam" id="PF03932">
    <property type="entry name" value="CutC"/>
    <property type="match status" value="1"/>
</dbReference>
<dbReference type="SUPFAM" id="SSF110395">
    <property type="entry name" value="CutC-like"/>
    <property type="match status" value="1"/>
</dbReference>
<sequence length="248" mass="26762">MALLEICCYSMECALTAQQNGADRVELCAAPKEGGLTPSLGVLKSVRQRVTIPVHPIIRPRGGDFCYSDGEFAAILEDVRTVRELGFPGLVTGVLDVDGNVDMPRMEKIMAAAGPLAVTFHRAFDMCANPLYTLNNLAELGIARVLTSGQKSDALQGLSKIMELIAHRDAPIIMAGAGVRAENLHHFLDAGVLEVHSSAGAWQASPMRYRNQGLSMSSDEHADEYSRYIVDGAAVAEMKGIIERHQAK</sequence>
<name>CUTC_ECO8A</name>
<keyword id="KW-0963">Cytoplasm</keyword>
<comment type="subunit">
    <text evidence="1">Homodimer.</text>
</comment>
<comment type="subcellular location">
    <subcellularLocation>
        <location evidence="1">Cytoplasm</location>
    </subcellularLocation>
</comment>
<comment type="similarity">
    <text evidence="1">Belongs to the CutC family.</text>
</comment>
<comment type="caution">
    <text evidence="1">Once thought to be involved in copper homeostasis, experiments in E.coli have shown this is not the case.</text>
</comment>
<proteinExistence type="inferred from homology"/>
<organism>
    <name type="scientific">Escherichia coli O8 (strain IAI1)</name>
    <dbReference type="NCBI Taxonomy" id="585034"/>
    <lineage>
        <taxon>Bacteria</taxon>
        <taxon>Pseudomonadati</taxon>
        <taxon>Pseudomonadota</taxon>
        <taxon>Gammaproteobacteria</taxon>
        <taxon>Enterobacterales</taxon>
        <taxon>Enterobacteriaceae</taxon>
        <taxon>Escherichia</taxon>
    </lineage>
</organism>
<feature type="chain" id="PRO_1000133833" description="PF03932 family protein CutC">
    <location>
        <begin position="1"/>
        <end position="248"/>
    </location>
</feature>
<accession>B7M2G5</accession>
<gene>
    <name evidence="1" type="primary">cutC</name>
    <name type="ordered locus">ECIAI1_1961</name>
</gene>